<comment type="function">
    <text evidence="1 2">Binds to the 50S ribosomal subunit and prevents its association with the 30S ribosomal subunit to form the 70S initiation complex.</text>
</comment>
<comment type="mass spectrometry" mass="24948.0" error="6.0" method="MALDI" evidence="2"/>
<comment type="similarity">
    <text evidence="1">Belongs to the eIF-6 family.</text>
</comment>
<reference key="1">
    <citation type="journal article" date="1996" name="Science">
        <title>Complete genome sequence of the methanogenic archaeon, Methanococcus jannaschii.</title>
        <authorList>
            <person name="Bult C.J."/>
            <person name="White O."/>
            <person name="Olsen G.J."/>
            <person name="Zhou L."/>
            <person name="Fleischmann R.D."/>
            <person name="Sutton G.G."/>
            <person name="Blake J.A."/>
            <person name="FitzGerald L.M."/>
            <person name="Clayton R.A."/>
            <person name="Gocayne J.D."/>
            <person name="Kerlavage A.R."/>
            <person name="Dougherty B.A."/>
            <person name="Tomb J.-F."/>
            <person name="Adams M.D."/>
            <person name="Reich C.I."/>
            <person name="Overbeek R."/>
            <person name="Kirkness E.F."/>
            <person name="Weinstock K.G."/>
            <person name="Merrick J.M."/>
            <person name="Glodek A."/>
            <person name="Scott J.L."/>
            <person name="Geoghagen N.S.M."/>
            <person name="Weidman J.F."/>
            <person name="Fuhrmann J.L."/>
            <person name="Nguyen D."/>
            <person name="Utterback T.R."/>
            <person name="Kelley J.M."/>
            <person name="Peterson J.D."/>
            <person name="Sadow P.W."/>
            <person name="Hanna M.C."/>
            <person name="Cotton M.D."/>
            <person name="Roberts K.M."/>
            <person name="Hurst M.A."/>
            <person name="Kaine B.P."/>
            <person name="Borodovsky M."/>
            <person name="Klenk H.-P."/>
            <person name="Fraser C.M."/>
            <person name="Smith H.O."/>
            <person name="Woese C.R."/>
            <person name="Venter J.C."/>
        </authorList>
    </citation>
    <scope>NUCLEOTIDE SEQUENCE [LARGE SCALE GENOMIC DNA]</scope>
    <source>
        <strain>ATCC 43067 / DSM 2661 / JAL-1 / JCM 10045 / NBRC 100440</strain>
    </source>
</reference>
<reference key="2">
    <citation type="journal article" date="2000" name="Nat. Struct. Biol.">
        <title>Crystal structures of ribosome anti-association factor IF6.</title>
        <authorList>
            <person name="Groft C.M."/>
            <person name="Beckmann R."/>
            <person name="Sali A."/>
            <person name="Burley S.K."/>
        </authorList>
    </citation>
    <scope>FUNCTION</scope>
    <scope>MASS SPECTROMETRY</scope>
    <scope>X-RAY CRYSTALLOGRAPHY (1.3 ANGSTROMS)</scope>
</reference>
<organism>
    <name type="scientific">Methanocaldococcus jannaschii (strain ATCC 43067 / DSM 2661 / JAL-1 / JCM 10045 / NBRC 100440)</name>
    <name type="common">Methanococcus jannaschii</name>
    <dbReference type="NCBI Taxonomy" id="243232"/>
    <lineage>
        <taxon>Archaea</taxon>
        <taxon>Methanobacteriati</taxon>
        <taxon>Methanobacteriota</taxon>
        <taxon>Methanomada group</taxon>
        <taxon>Methanococci</taxon>
        <taxon>Methanococcales</taxon>
        <taxon>Methanocaldococcaceae</taxon>
        <taxon>Methanocaldococcus</taxon>
    </lineage>
</organism>
<feature type="chain" id="PRO_0000153746" description="Translation initiation factor 6">
    <location>
        <begin position="1"/>
        <end position="228"/>
    </location>
</feature>
<feature type="strand" evidence="3">
    <location>
        <begin position="4"/>
        <end position="7"/>
    </location>
</feature>
<feature type="helix" evidence="3">
    <location>
        <begin position="15"/>
        <end position="18"/>
    </location>
</feature>
<feature type="strand" evidence="3">
    <location>
        <begin position="23"/>
        <end position="28"/>
    </location>
</feature>
<feature type="helix" evidence="3">
    <location>
        <begin position="34"/>
        <end position="44"/>
    </location>
</feature>
<feature type="strand" evidence="3">
    <location>
        <begin position="47"/>
        <end position="50"/>
    </location>
</feature>
<feature type="helix" evidence="3">
    <location>
        <begin position="59"/>
        <end position="62"/>
    </location>
</feature>
<feature type="strand" evidence="3">
    <location>
        <begin position="67"/>
        <end position="73"/>
    </location>
</feature>
<feature type="helix" evidence="3">
    <location>
        <begin position="78"/>
        <end position="90"/>
    </location>
</feature>
<feature type="strand" evidence="3">
    <location>
        <begin position="96"/>
        <end position="100"/>
    </location>
</feature>
<feature type="helix" evidence="3">
    <location>
        <begin position="107"/>
        <end position="110"/>
    </location>
</feature>
<feature type="strand" evidence="3">
    <location>
        <begin position="111"/>
        <end position="113"/>
    </location>
</feature>
<feature type="strand" evidence="3">
    <location>
        <begin position="115"/>
        <end position="120"/>
    </location>
</feature>
<feature type="helix" evidence="3">
    <location>
        <begin position="122"/>
        <end position="127"/>
    </location>
</feature>
<feature type="helix" evidence="3">
    <location>
        <begin position="128"/>
        <end position="135"/>
    </location>
</feature>
<feature type="strand" evidence="3">
    <location>
        <begin position="137"/>
        <end position="141"/>
    </location>
</feature>
<feature type="turn" evidence="3">
    <location>
        <begin position="150"/>
        <end position="152"/>
    </location>
</feature>
<feature type="strand" evidence="3">
    <location>
        <begin position="153"/>
        <end position="156"/>
    </location>
</feature>
<feature type="strand" evidence="3">
    <location>
        <begin position="158"/>
        <end position="163"/>
    </location>
</feature>
<feature type="helix" evidence="3">
    <location>
        <begin position="169"/>
        <end position="179"/>
    </location>
</feature>
<feature type="strand" evidence="3">
    <location>
        <begin position="182"/>
        <end position="186"/>
    </location>
</feature>
<feature type="turn" evidence="3">
    <location>
        <begin position="190"/>
        <end position="192"/>
    </location>
</feature>
<feature type="helix" evidence="3">
    <location>
        <begin position="196"/>
        <end position="198"/>
    </location>
</feature>
<feature type="strand" evidence="3">
    <location>
        <begin position="200"/>
        <end position="202"/>
    </location>
</feature>
<feature type="strand" evidence="3">
    <location>
        <begin position="207"/>
        <end position="210"/>
    </location>
</feature>
<feature type="helix" evidence="3">
    <location>
        <begin position="215"/>
        <end position="225"/>
    </location>
</feature>
<name>IF6_METJA</name>
<sequence length="228" mass="24459">MTMIIRKYFSGIPTIGVLALTTEEITLLPIFLDKDDVNEVSEVLETKCLQTNIGGSSLVGSLSVANKYGLLLPKIVEDEELDRIKNFLKENNLDLNVEIIKSKNTALGNLILTNDKGALISPELKDFKKDIEDSLNVEVEIGTIAELPTVGSNAVVTNKGCLTHPLVEDDELEFLKSLFKVEYIGKGTANKGTTSVGACIIANSKGAVVGGDTTGPELLIIEDALGLI</sequence>
<accession>Q60357</accession>
<gene>
    <name evidence="1" type="primary">eif6</name>
    <name type="ordered locus">MJ0048</name>
</gene>
<evidence type="ECO:0000255" key="1">
    <source>
        <dbReference type="HAMAP-Rule" id="MF_00032"/>
    </source>
</evidence>
<evidence type="ECO:0000269" key="2">
    <source>
    </source>
</evidence>
<evidence type="ECO:0007829" key="3">
    <source>
        <dbReference type="PDB" id="1G61"/>
    </source>
</evidence>
<protein>
    <recommendedName>
        <fullName evidence="1">Translation initiation factor 6</fullName>
        <shortName evidence="1">aIF-6</shortName>
    </recommendedName>
</protein>
<dbReference type="EMBL" id="L77117">
    <property type="protein sequence ID" value="AAB98029.1"/>
    <property type="molecule type" value="Genomic_DNA"/>
</dbReference>
<dbReference type="PIR" id="H64305">
    <property type="entry name" value="H64305"/>
</dbReference>
<dbReference type="PDB" id="1G61">
    <property type="method" value="X-ray"/>
    <property type="resolution" value="1.30 A"/>
    <property type="chains" value="A/B=1-228"/>
</dbReference>
<dbReference type="PDBsum" id="1G61"/>
<dbReference type="SMR" id="Q60357"/>
<dbReference type="FunCoup" id="Q60357">
    <property type="interactions" value="158"/>
</dbReference>
<dbReference type="STRING" id="243232.MJ_0048"/>
<dbReference type="PaxDb" id="243232-MJ_0048"/>
<dbReference type="EnsemblBacteria" id="AAB98029">
    <property type="protein sequence ID" value="AAB98029"/>
    <property type="gene ID" value="MJ_0048"/>
</dbReference>
<dbReference type="KEGG" id="mja:MJ_0048"/>
<dbReference type="eggNOG" id="arCOG04176">
    <property type="taxonomic scope" value="Archaea"/>
</dbReference>
<dbReference type="HOGENOM" id="CLU_071894_1_0_2"/>
<dbReference type="InParanoid" id="Q60357"/>
<dbReference type="PhylomeDB" id="Q60357"/>
<dbReference type="EvolutionaryTrace" id="Q60357"/>
<dbReference type="Proteomes" id="UP000000805">
    <property type="component" value="Chromosome"/>
</dbReference>
<dbReference type="GO" id="GO:0005829">
    <property type="term" value="C:cytosol"/>
    <property type="evidence" value="ECO:0000318"/>
    <property type="project" value="GO_Central"/>
</dbReference>
<dbReference type="GO" id="GO:0043022">
    <property type="term" value="F:ribosome binding"/>
    <property type="evidence" value="ECO:0007669"/>
    <property type="project" value="InterPro"/>
</dbReference>
<dbReference type="GO" id="GO:0003743">
    <property type="term" value="F:translation initiation factor activity"/>
    <property type="evidence" value="ECO:0007669"/>
    <property type="project" value="UniProtKB-UniRule"/>
</dbReference>
<dbReference type="GO" id="GO:1902626">
    <property type="term" value="P:assembly of large subunit precursor of preribosome"/>
    <property type="evidence" value="ECO:0000318"/>
    <property type="project" value="GO_Central"/>
</dbReference>
<dbReference type="GO" id="GO:0042256">
    <property type="term" value="P:cytosolic ribosome assembly"/>
    <property type="evidence" value="ECO:0007669"/>
    <property type="project" value="InterPro"/>
</dbReference>
<dbReference type="GO" id="GO:0000460">
    <property type="term" value="P:maturation of 5.8S rRNA"/>
    <property type="evidence" value="ECO:0000318"/>
    <property type="project" value="GO_Central"/>
</dbReference>
<dbReference type="GO" id="GO:0000470">
    <property type="term" value="P:maturation of LSU-rRNA"/>
    <property type="evidence" value="ECO:0000318"/>
    <property type="project" value="GO_Central"/>
</dbReference>
<dbReference type="CDD" id="cd00527">
    <property type="entry name" value="IF6"/>
    <property type="match status" value="1"/>
</dbReference>
<dbReference type="FunFam" id="3.75.10.10:FF:000011">
    <property type="entry name" value="Translation initiation factor 6"/>
    <property type="match status" value="1"/>
</dbReference>
<dbReference type="Gene3D" id="3.75.10.10">
    <property type="entry name" value="L-arginine/glycine Amidinotransferase, Chain A"/>
    <property type="match status" value="1"/>
</dbReference>
<dbReference type="HAMAP" id="MF_00032">
    <property type="entry name" value="eIF_6"/>
    <property type="match status" value="1"/>
</dbReference>
<dbReference type="InterPro" id="IPR002769">
    <property type="entry name" value="eIF6"/>
</dbReference>
<dbReference type="NCBIfam" id="TIGR00323">
    <property type="entry name" value="eIF-6"/>
    <property type="match status" value="1"/>
</dbReference>
<dbReference type="NCBIfam" id="NF003127">
    <property type="entry name" value="PRK04046.1-3"/>
    <property type="match status" value="1"/>
</dbReference>
<dbReference type="PANTHER" id="PTHR10784">
    <property type="entry name" value="TRANSLATION INITIATION FACTOR 6"/>
    <property type="match status" value="1"/>
</dbReference>
<dbReference type="Pfam" id="PF01912">
    <property type="entry name" value="eIF-6"/>
    <property type="match status" value="1"/>
</dbReference>
<dbReference type="PIRSF" id="PIRSF006413">
    <property type="entry name" value="IF-6"/>
    <property type="match status" value="1"/>
</dbReference>
<dbReference type="SMART" id="SM00654">
    <property type="entry name" value="eIF6"/>
    <property type="match status" value="1"/>
</dbReference>
<dbReference type="SUPFAM" id="SSF55909">
    <property type="entry name" value="Pentein"/>
    <property type="match status" value="1"/>
</dbReference>
<keyword id="KW-0002">3D-structure</keyword>
<keyword id="KW-0396">Initiation factor</keyword>
<keyword id="KW-0648">Protein biosynthesis</keyword>
<keyword id="KW-1185">Reference proteome</keyword>
<proteinExistence type="evidence at protein level"/>